<gene>
    <name type="primary">PRRX2</name>
    <name type="synonym">PMX2</name>
    <name type="synonym">PRX2</name>
</gene>
<organism>
    <name type="scientific">Homo sapiens</name>
    <name type="common">Human</name>
    <dbReference type="NCBI Taxonomy" id="9606"/>
    <lineage>
        <taxon>Eukaryota</taxon>
        <taxon>Metazoa</taxon>
        <taxon>Chordata</taxon>
        <taxon>Craniata</taxon>
        <taxon>Vertebrata</taxon>
        <taxon>Euteleostomi</taxon>
        <taxon>Mammalia</taxon>
        <taxon>Eutheria</taxon>
        <taxon>Euarchontoglires</taxon>
        <taxon>Primates</taxon>
        <taxon>Haplorrhini</taxon>
        <taxon>Catarrhini</taxon>
        <taxon>Hominidae</taxon>
        <taxon>Homo</taxon>
    </lineage>
</organism>
<dbReference type="EMBL" id="AF061970">
    <property type="protein sequence ID" value="AAF17708.1"/>
    <property type="molecule type" value="mRNA"/>
</dbReference>
<dbReference type="EMBL" id="AL590369">
    <property type="status" value="NOT_ANNOTATED_CDS"/>
    <property type="molecule type" value="Genomic_DNA"/>
</dbReference>
<dbReference type="EMBL" id="CH471090">
    <property type="protein sequence ID" value="EAW87901.1"/>
    <property type="molecule type" value="Genomic_DNA"/>
</dbReference>
<dbReference type="EMBL" id="BC014645">
    <property type="protein sequence ID" value="AAH14645.1"/>
    <property type="molecule type" value="mRNA"/>
</dbReference>
<dbReference type="EMBL" id="U81600">
    <property type="protein sequence ID" value="AAB39864.1"/>
    <property type="molecule type" value="mRNA"/>
</dbReference>
<dbReference type="CCDS" id="CCDS6926.1"/>
<dbReference type="RefSeq" id="NP_057391.1">
    <property type="nucleotide sequence ID" value="NM_016307.4"/>
</dbReference>
<dbReference type="SMR" id="Q99811"/>
<dbReference type="BioGRID" id="119548">
    <property type="interactions" value="1"/>
</dbReference>
<dbReference type="CORUM" id="Q99811"/>
<dbReference type="FunCoup" id="Q99811">
    <property type="interactions" value="136"/>
</dbReference>
<dbReference type="STRING" id="9606.ENSP00000361547"/>
<dbReference type="GlyGen" id="Q99811">
    <property type="glycosylation" value="1 site"/>
</dbReference>
<dbReference type="iPTMnet" id="Q99811"/>
<dbReference type="PhosphoSitePlus" id="Q99811"/>
<dbReference type="BioMuta" id="PRRX2"/>
<dbReference type="DMDM" id="12644475"/>
<dbReference type="jPOST" id="Q99811"/>
<dbReference type="MassIVE" id="Q99811"/>
<dbReference type="PaxDb" id="9606-ENSP00000361547"/>
<dbReference type="PeptideAtlas" id="Q99811"/>
<dbReference type="ProteomicsDB" id="78488"/>
<dbReference type="Antibodypedia" id="31430">
    <property type="antibodies" value="158 antibodies from 25 providers"/>
</dbReference>
<dbReference type="DNASU" id="51450"/>
<dbReference type="Ensembl" id="ENST00000372469.6">
    <property type="protein sequence ID" value="ENSP00000361547.4"/>
    <property type="gene ID" value="ENSG00000167157.11"/>
</dbReference>
<dbReference type="GeneID" id="51450"/>
<dbReference type="KEGG" id="hsa:51450"/>
<dbReference type="MANE-Select" id="ENST00000372469.6">
    <property type="protein sequence ID" value="ENSP00000361547.4"/>
    <property type="RefSeq nucleotide sequence ID" value="NM_016307.4"/>
    <property type="RefSeq protein sequence ID" value="NP_057391.1"/>
</dbReference>
<dbReference type="UCSC" id="uc004byh.4">
    <property type="organism name" value="human"/>
</dbReference>
<dbReference type="AGR" id="HGNC:21338"/>
<dbReference type="CTD" id="51450"/>
<dbReference type="DisGeNET" id="51450"/>
<dbReference type="GeneCards" id="PRRX2"/>
<dbReference type="HGNC" id="HGNC:21338">
    <property type="gene designation" value="PRRX2"/>
</dbReference>
<dbReference type="HPA" id="ENSG00000167157">
    <property type="expression patterns" value="Tissue enhanced (cervix, skin)"/>
</dbReference>
<dbReference type="MIM" id="604675">
    <property type="type" value="gene"/>
</dbReference>
<dbReference type="neXtProt" id="NX_Q99811"/>
<dbReference type="OpenTargets" id="ENSG00000167157"/>
<dbReference type="PharmGKB" id="PA134871679"/>
<dbReference type="VEuPathDB" id="HostDB:ENSG00000167157"/>
<dbReference type="eggNOG" id="KOG0490">
    <property type="taxonomic scope" value="Eukaryota"/>
</dbReference>
<dbReference type="GeneTree" id="ENSGT00940000161643"/>
<dbReference type="HOGENOM" id="CLU_087323_0_0_1"/>
<dbReference type="InParanoid" id="Q99811"/>
<dbReference type="OMA" id="KAREYSM"/>
<dbReference type="OrthoDB" id="6159439at2759"/>
<dbReference type="PAN-GO" id="Q99811">
    <property type="GO annotations" value="4 GO annotations based on evolutionary models"/>
</dbReference>
<dbReference type="PhylomeDB" id="Q99811"/>
<dbReference type="TreeFam" id="TF351612"/>
<dbReference type="PathwayCommons" id="Q99811"/>
<dbReference type="SignaLink" id="Q99811"/>
<dbReference type="BioGRID-ORCS" id="51450">
    <property type="hits" value="13 hits in 1168 CRISPR screens"/>
</dbReference>
<dbReference type="ChiTaRS" id="PRRX2">
    <property type="organism name" value="human"/>
</dbReference>
<dbReference type="GeneWiki" id="PRRX2"/>
<dbReference type="GenomeRNAi" id="51450"/>
<dbReference type="Pharos" id="Q99811">
    <property type="development level" value="Tbio"/>
</dbReference>
<dbReference type="PRO" id="PR:Q99811"/>
<dbReference type="Proteomes" id="UP000005640">
    <property type="component" value="Chromosome 9"/>
</dbReference>
<dbReference type="RNAct" id="Q99811">
    <property type="molecule type" value="protein"/>
</dbReference>
<dbReference type="Bgee" id="ENSG00000167157">
    <property type="expression patterns" value="Expressed in ascending aorta and 136 other cell types or tissues"/>
</dbReference>
<dbReference type="ExpressionAtlas" id="Q99811">
    <property type="expression patterns" value="baseline and differential"/>
</dbReference>
<dbReference type="GO" id="GO:0000785">
    <property type="term" value="C:chromatin"/>
    <property type="evidence" value="ECO:0000247"/>
    <property type="project" value="NTNU_SB"/>
</dbReference>
<dbReference type="GO" id="GO:0005634">
    <property type="term" value="C:nucleus"/>
    <property type="evidence" value="ECO:0000318"/>
    <property type="project" value="GO_Central"/>
</dbReference>
<dbReference type="GO" id="GO:0003700">
    <property type="term" value="F:DNA-binding transcription factor activity"/>
    <property type="evidence" value="ECO:0000303"/>
    <property type="project" value="UniProtKB"/>
</dbReference>
<dbReference type="GO" id="GO:0000981">
    <property type="term" value="F:DNA-binding transcription factor activity, RNA polymerase II-specific"/>
    <property type="evidence" value="ECO:0000247"/>
    <property type="project" value="NTNU_SB"/>
</dbReference>
<dbReference type="GO" id="GO:0000978">
    <property type="term" value="F:RNA polymerase II cis-regulatory region sequence-specific DNA binding"/>
    <property type="evidence" value="ECO:0000318"/>
    <property type="project" value="GO_Central"/>
</dbReference>
<dbReference type="GO" id="GO:1990837">
    <property type="term" value="F:sequence-specific double-stranded DNA binding"/>
    <property type="evidence" value="ECO:0000314"/>
    <property type="project" value="ARUK-UCL"/>
</dbReference>
<dbReference type="GO" id="GO:0006355">
    <property type="term" value="P:regulation of DNA-templated transcription"/>
    <property type="evidence" value="ECO:0000303"/>
    <property type="project" value="UniProtKB"/>
</dbReference>
<dbReference type="GO" id="GO:0006357">
    <property type="term" value="P:regulation of transcription by RNA polymerase II"/>
    <property type="evidence" value="ECO:0000318"/>
    <property type="project" value="GO_Central"/>
</dbReference>
<dbReference type="CDD" id="cd00086">
    <property type="entry name" value="homeodomain"/>
    <property type="match status" value="1"/>
</dbReference>
<dbReference type="FunFam" id="1.10.10.60:FF:000066">
    <property type="entry name" value="Paired mesoderm homeobox protein 1"/>
    <property type="match status" value="1"/>
</dbReference>
<dbReference type="Gene3D" id="1.10.10.60">
    <property type="entry name" value="Homeodomain-like"/>
    <property type="match status" value="1"/>
</dbReference>
<dbReference type="InterPro" id="IPR001356">
    <property type="entry name" value="HD"/>
</dbReference>
<dbReference type="InterPro" id="IPR017970">
    <property type="entry name" value="Homeobox_CS"/>
</dbReference>
<dbReference type="InterPro" id="IPR009057">
    <property type="entry name" value="Homeodomain-like_sf"/>
</dbReference>
<dbReference type="InterPro" id="IPR003654">
    <property type="entry name" value="OAR_dom"/>
</dbReference>
<dbReference type="InterPro" id="IPR043378">
    <property type="entry name" value="PRRX1/2"/>
</dbReference>
<dbReference type="PANTHER" id="PTHR46385">
    <property type="entry name" value="PAIRED MESODERM HOMEOBOX PROTEIN 1-RELATED"/>
    <property type="match status" value="1"/>
</dbReference>
<dbReference type="PANTHER" id="PTHR46385:SF3">
    <property type="entry name" value="PAIRED MESODERM HOMEOBOX PROTEIN 2"/>
    <property type="match status" value="1"/>
</dbReference>
<dbReference type="Pfam" id="PF00046">
    <property type="entry name" value="Homeodomain"/>
    <property type="match status" value="1"/>
</dbReference>
<dbReference type="Pfam" id="PF03826">
    <property type="entry name" value="OAR"/>
    <property type="match status" value="1"/>
</dbReference>
<dbReference type="SMART" id="SM00389">
    <property type="entry name" value="HOX"/>
    <property type="match status" value="1"/>
</dbReference>
<dbReference type="SUPFAM" id="SSF46689">
    <property type="entry name" value="Homeodomain-like"/>
    <property type="match status" value="1"/>
</dbReference>
<dbReference type="PROSITE" id="PS00027">
    <property type="entry name" value="HOMEOBOX_1"/>
    <property type="match status" value="1"/>
</dbReference>
<dbReference type="PROSITE" id="PS50071">
    <property type="entry name" value="HOMEOBOX_2"/>
    <property type="match status" value="1"/>
</dbReference>
<dbReference type="PROSITE" id="PS50803">
    <property type="entry name" value="OAR"/>
    <property type="match status" value="1"/>
</dbReference>
<accession>Q99811</accession>
<accession>Q5SZB5</accession>
<accession>Q9UIB3</accession>
<sequence>MDSAAAAFALDKPALGPGPPPPPPALGPGDCAQARKNFSVSHLLDLEEVAAAGRLAARPGARAEAREGAAREPSGGSSGSEAAPQDGECPSPGRGSAAKRKKKQRRNRTTFNSSQLQALERVFERTHYPDAFVREELARRVNLSEARVQVWFQNRRAKFRRNERAMLASRSASLLKSYSQEAAIEQPVAPRPTALSPDYLSWTASSPYSTVPPYSPGSSGPATPGVNMANSIASLRLKAKEFSLHHSQVPTVN</sequence>
<feature type="chain" id="PRO_0000049255" description="Paired mesoderm homeobox protein 2">
    <location>
        <begin position="1"/>
        <end position="253"/>
    </location>
</feature>
<feature type="DNA-binding region" description="Homeobox" evidence="1">
    <location>
        <begin position="104"/>
        <end position="163"/>
    </location>
</feature>
<feature type="region of interest" description="Disordered" evidence="3">
    <location>
        <begin position="1"/>
        <end position="33"/>
    </location>
</feature>
<feature type="region of interest" description="Disordered" evidence="3">
    <location>
        <begin position="55"/>
        <end position="113"/>
    </location>
</feature>
<feature type="short sequence motif" description="OAR" evidence="2">
    <location>
        <begin position="230"/>
        <end position="243"/>
    </location>
</feature>
<feature type="compositionally biased region" description="Low complexity" evidence="3">
    <location>
        <begin position="1"/>
        <end position="15"/>
    </location>
</feature>
<feature type="compositionally biased region" description="Pro residues" evidence="3">
    <location>
        <begin position="16"/>
        <end position="26"/>
    </location>
</feature>
<feature type="compositionally biased region" description="Basic and acidic residues" evidence="3">
    <location>
        <begin position="61"/>
        <end position="70"/>
    </location>
</feature>
<feature type="compositionally biased region" description="Low complexity" evidence="3">
    <location>
        <begin position="71"/>
        <end position="84"/>
    </location>
</feature>
<feature type="compositionally biased region" description="Basic residues" evidence="3">
    <location>
        <begin position="97"/>
        <end position="108"/>
    </location>
</feature>
<feature type="sequence conflict" description="In Ref. 5; AAB39864." evidence="5" ref="5">
    <original>P</original>
    <variation>S</variation>
    <location>
        <position position="90"/>
    </location>
</feature>
<feature type="sequence conflict" description="In Ref. 5; AAB39864." evidence="5" ref="5">
    <original>SAA</original>
    <variation>RPP</variation>
    <location>
        <begin position="96"/>
        <end position="98"/>
    </location>
</feature>
<comment type="function">
    <text evidence="4">May play a role in the scarless healing of cutaneous wounds during the first two trimesters of development.</text>
</comment>
<comment type="subcellular location">
    <subcellularLocation>
        <location evidence="1 2">Nucleus</location>
    </subcellularLocation>
</comment>
<comment type="tissue specificity">
    <text evidence="4">In fetal skin, highest expression found in cells of mesodermal origin within the dermal papilla of the developing hair shaft. Not detected in epidermis or dermis. In adult skin, weakly expressed within the basal layers of the epidermis. Not expressed in dermis.</text>
</comment>
<comment type="developmental stage">
    <text evidence="4">Higher expression in fetus than in adult.</text>
</comment>
<comment type="similarity">
    <text evidence="5">Belongs to the paired homeobox family.</text>
</comment>
<comment type="online information" name="Atlas of Genetics and Cytogenetics in Oncology and Haematology">
    <link uri="https://atlasgeneticsoncology.org/gene/42897/PRRX2"/>
</comment>
<protein>
    <recommendedName>
        <fullName>Paired mesoderm homeobox protein 2</fullName>
    </recommendedName>
    <alternativeName>
        <fullName>Paired-related homeobox protein 2</fullName>
        <shortName>PRX-2</shortName>
    </alternativeName>
</protein>
<keyword id="KW-0217">Developmental protein</keyword>
<keyword id="KW-0238">DNA-binding</keyword>
<keyword id="KW-0371">Homeobox</keyword>
<keyword id="KW-0539">Nucleus</keyword>
<keyword id="KW-1267">Proteomics identification</keyword>
<keyword id="KW-1185">Reference proteome</keyword>
<proteinExistence type="evidence at protein level"/>
<reference key="1">
    <citation type="journal article" date="2000" name="Mamm. Genome">
        <title>Human PRRX1 and PRRX2 genes: cloning, expression, genomic localization, and exclusion as disease genes for Nager syndrome.</title>
        <authorList>
            <person name="Norris R.A."/>
            <person name="Scott K.K."/>
            <person name="Moore C.S."/>
            <person name="Stetten G."/>
            <person name="Brown C.R."/>
            <person name="Jabs E.W."/>
            <person name="Wulfsberg E.A."/>
            <person name="Yu J."/>
            <person name="Kern M.J."/>
        </authorList>
    </citation>
    <scope>NUCLEOTIDE SEQUENCE [MRNA]</scope>
</reference>
<reference key="2">
    <citation type="journal article" date="2004" name="Nature">
        <title>DNA sequence and analysis of human chromosome 9.</title>
        <authorList>
            <person name="Humphray S.J."/>
            <person name="Oliver K."/>
            <person name="Hunt A.R."/>
            <person name="Plumb R.W."/>
            <person name="Loveland J.E."/>
            <person name="Howe K.L."/>
            <person name="Andrews T.D."/>
            <person name="Searle S."/>
            <person name="Hunt S.E."/>
            <person name="Scott C.E."/>
            <person name="Jones M.C."/>
            <person name="Ainscough R."/>
            <person name="Almeida J.P."/>
            <person name="Ambrose K.D."/>
            <person name="Ashwell R.I.S."/>
            <person name="Babbage A.K."/>
            <person name="Babbage S."/>
            <person name="Bagguley C.L."/>
            <person name="Bailey J."/>
            <person name="Banerjee R."/>
            <person name="Barker D.J."/>
            <person name="Barlow K.F."/>
            <person name="Bates K."/>
            <person name="Beasley H."/>
            <person name="Beasley O."/>
            <person name="Bird C.P."/>
            <person name="Bray-Allen S."/>
            <person name="Brown A.J."/>
            <person name="Brown J.Y."/>
            <person name="Burford D."/>
            <person name="Burrill W."/>
            <person name="Burton J."/>
            <person name="Carder C."/>
            <person name="Carter N.P."/>
            <person name="Chapman J.C."/>
            <person name="Chen Y."/>
            <person name="Clarke G."/>
            <person name="Clark S.Y."/>
            <person name="Clee C.M."/>
            <person name="Clegg S."/>
            <person name="Collier R.E."/>
            <person name="Corby N."/>
            <person name="Crosier M."/>
            <person name="Cummings A.T."/>
            <person name="Davies J."/>
            <person name="Dhami P."/>
            <person name="Dunn M."/>
            <person name="Dutta I."/>
            <person name="Dyer L.W."/>
            <person name="Earthrowl M.E."/>
            <person name="Faulkner L."/>
            <person name="Fleming C.J."/>
            <person name="Frankish A."/>
            <person name="Frankland J.A."/>
            <person name="French L."/>
            <person name="Fricker D.G."/>
            <person name="Garner P."/>
            <person name="Garnett J."/>
            <person name="Ghori J."/>
            <person name="Gilbert J.G.R."/>
            <person name="Glison C."/>
            <person name="Grafham D.V."/>
            <person name="Gribble S."/>
            <person name="Griffiths C."/>
            <person name="Griffiths-Jones S."/>
            <person name="Grocock R."/>
            <person name="Guy J."/>
            <person name="Hall R.E."/>
            <person name="Hammond S."/>
            <person name="Harley J.L."/>
            <person name="Harrison E.S.I."/>
            <person name="Hart E.A."/>
            <person name="Heath P.D."/>
            <person name="Henderson C.D."/>
            <person name="Hopkins B.L."/>
            <person name="Howard P.J."/>
            <person name="Howden P.J."/>
            <person name="Huckle E."/>
            <person name="Johnson C."/>
            <person name="Johnson D."/>
            <person name="Joy A.A."/>
            <person name="Kay M."/>
            <person name="Keenan S."/>
            <person name="Kershaw J.K."/>
            <person name="Kimberley A.M."/>
            <person name="King A."/>
            <person name="Knights A."/>
            <person name="Laird G.K."/>
            <person name="Langford C."/>
            <person name="Lawlor S."/>
            <person name="Leongamornlert D.A."/>
            <person name="Leversha M."/>
            <person name="Lloyd C."/>
            <person name="Lloyd D.M."/>
            <person name="Lovell J."/>
            <person name="Martin S."/>
            <person name="Mashreghi-Mohammadi M."/>
            <person name="Matthews L."/>
            <person name="McLaren S."/>
            <person name="McLay K.E."/>
            <person name="McMurray A."/>
            <person name="Milne S."/>
            <person name="Nickerson T."/>
            <person name="Nisbett J."/>
            <person name="Nordsiek G."/>
            <person name="Pearce A.V."/>
            <person name="Peck A.I."/>
            <person name="Porter K.M."/>
            <person name="Pandian R."/>
            <person name="Pelan S."/>
            <person name="Phillimore B."/>
            <person name="Povey S."/>
            <person name="Ramsey Y."/>
            <person name="Rand V."/>
            <person name="Scharfe M."/>
            <person name="Sehra H.K."/>
            <person name="Shownkeen R."/>
            <person name="Sims S.K."/>
            <person name="Skuce C.D."/>
            <person name="Smith M."/>
            <person name="Steward C.A."/>
            <person name="Swarbreck D."/>
            <person name="Sycamore N."/>
            <person name="Tester J."/>
            <person name="Thorpe A."/>
            <person name="Tracey A."/>
            <person name="Tromans A."/>
            <person name="Thomas D.W."/>
            <person name="Wall M."/>
            <person name="Wallis J.M."/>
            <person name="West A.P."/>
            <person name="Whitehead S.L."/>
            <person name="Willey D.L."/>
            <person name="Williams S.A."/>
            <person name="Wilming L."/>
            <person name="Wray P.W."/>
            <person name="Young L."/>
            <person name="Ashurst J.L."/>
            <person name="Coulson A."/>
            <person name="Blocker H."/>
            <person name="Durbin R.M."/>
            <person name="Sulston J.E."/>
            <person name="Hubbard T."/>
            <person name="Jackson M.J."/>
            <person name="Bentley D.R."/>
            <person name="Beck S."/>
            <person name="Rogers J."/>
            <person name="Dunham I."/>
        </authorList>
    </citation>
    <scope>NUCLEOTIDE SEQUENCE [LARGE SCALE GENOMIC DNA]</scope>
</reference>
<reference key="3">
    <citation type="submission" date="2005-07" db="EMBL/GenBank/DDBJ databases">
        <authorList>
            <person name="Mural R.J."/>
            <person name="Istrail S."/>
            <person name="Sutton G.G."/>
            <person name="Florea L."/>
            <person name="Halpern A.L."/>
            <person name="Mobarry C.M."/>
            <person name="Lippert R."/>
            <person name="Walenz B."/>
            <person name="Shatkay H."/>
            <person name="Dew I."/>
            <person name="Miller J.R."/>
            <person name="Flanigan M.J."/>
            <person name="Edwards N.J."/>
            <person name="Bolanos R."/>
            <person name="Fasulo D."/>
            <person name="Halldorsson B.V."/>
            <person name="Hannenhalli S."/>
            <person name="Turner R."/>
            <person name="Yooseph S."/>
            <person name="Lu F."/>
            <person name="Nusskern D.R."/>
            <person name="Shue B.C."/>
            <person name="Zheng X.H."/>
            <person name="Zhong F."/>
            <person name="Delcher A.L."/>
            <person name="Huson D.H."/>
            <person name="Kravitz S.A."/>
            <person name="Mouchard L."/>
            <person name="Reinert K."/>
            <person name="Remington K.A."/>
            <person name="Clark A.G."/>
            <person name="Waterman M.S."/>
            <person name="Eichler E.E."/>
            <person name="Adams M.D."/>
            <person name="Hunkapiller M.W."/>
            <person name="Myers E.W."/>
            <person name="Venter J.C."/>
        </authorList>
    </citation>
    <scope>NUCLEOTIDE SEQUENCE [LARGE SCALE GENOMIC DNA]</scope>
</reference>
<reference key="4">
    <citation type="journal article" date="2004" name="Genome Res.">
        <title>The status, quality, and expansion of the NIH full-length cDNA project: the Mammalian Gene Collection (MGC).</title>
        <authorList>
            <consortium name="The MGC Project Team"/>
        </authorList>
    </citation>
    <scope>NUCLEOTIDE SEQUENCE [LARGE SCALE MRNA]</scope>
    <source>
        <tissue>Uterus</tissue>
    </source>
</reference>
<reference key="5">
    <citation type="journal article" date="1998" name="J. Invest. Dermatol.">
        <title>Modulation of the human homeobox genes PRX-2 and HOXB13 in scarless fetal wounds.</title>
        <authorList>
            <person name="Stelnicki E.J."/>
            <person name="Arbeit J."/>
            <person name="Cass D.L."/>
            <person name="Saner C."/>
            <person name="Harrison M."/>
            <person name="Largman C."/>
        </authorList>
    </citation>
    <scope>NUCLEOTIDE SEQUENCE [MRNA] OF 90-253</scope>
    <scope>FUNCTION</scope>
    <scope>TISSUE SPECIFICITY</scope>
    <scope>DEVELOPMENTAL STAGE</scope>
    <source>
        <tissue>Fetal fibroblast</tissue>
    </source>
</reference>
<evidence type="ECO:0000255" key="1">
    <source>
        <dbReference type="PROSITE-ProRule" id="PRU00108"/>
    </source>
</evidence>
<evidence type="ECO:0000255" key="2">
    <source>
        <dbReference type="PROSITE-ProRule" id="PRU00138"/>
    </source>
</evidence>
<evidence type="ECO:0000256" key="3">
    <source>
        <dbReference type="SAM" id="MobiDB-lite"/>
    </source>
</evidence>
<evidence type="ECO:0000269" key="4">
    <source>
    </source>
</evidence>
<evidence type="ECO:0000305" key="5"/>
<name>PRRX2_HUMAN</name>